<protein>
    <recommendedName>
        <fullName evidence="1">Glutamine--tRNA ligase</fullName>
        <ecNumber evidence="1">6.1.1.18</ecNumber>
    </recommendedName>
    <alternativeName>
        <fullName evidence="1">Glutaminyl-tRNA synthetase</fullName>
        <shortName evidence="1">GlnRS</shortName>
    </alternativeName>
</protein>
<keyword id="KW-0030">Aminoacyl-tRNA synthetase</keyword>
<keyword id="KW-0067">ATP-binding</keyword>
<keyword id="KW-0963">Cytoplasm</keyword>
<keyword id="KW-0436">Ligase</keyword>
<keyword id="KW-0547">Nucleotide-binding</keyword>
<keyword id="KW-0648">Protein biosynthesis</keyword>
<keyword id="KW-1185">Reference proteome</keyword>
<evidence type="ECO:0000255" key="1">
    <source>
        <dbReference type="HAMAP-Rule" id="MF_00126"/>
    </source>
</evidence>
<proteinExistence type="inferred from homology"/>
<feature type="chain" id="PRO_0000242882" description="Glutamine--tRNA ligase">
    <location>
        <begin position="1"/>
        <end position="579"/>
    </location>
</feature>
<feature type="short sequence motif" description="'HIGH' region" evidence="1">
    <location>
        <begin position="41"/>
        <end position="51"/>
    </location>
</feature>
<feature type="short sequence motif" description="'KMSKS' region" evidence="1">
    <location>
        <begin position="292"/>
        <end position="296"/>
    </location>
</feature>
<feature type="binding site" evidence="1">
    <location>
        <begin position="42"/>
        <end position="44"/>
    </location>
    <ligand>
        <name>ATP</name>
        <dbReference type="ChEBI" id="CHEBI:30616"/>
    </ligand>
</feature>
<feature type="binding site" evidence="1">
    <location>
        <begin position="48"/>
        <end position="54"/>
    </location>
    <ligand>
        <name>ATP</name>
        <dbReference type="ChEBI" id="CHEBI:30616"/>
    </ligand>
</feature>
<feature type="binding site" evidence="1">
    <location>
        <position position="74"/>
    </location>
    <ligand>
        <name>L-glutamine</name>
        <dbReference type="ChEBI" id="CHEBI:58359"/>
    </ligand>
</feature>
<feature type="binding site" evidence="1">
    <location>
        <position position="218"/>
    </location>
    <ligand>
        <name>L-glutamine</name>
        <dbReference type="ChEBI" id="CHEBI:58359"/>
    </ligand>
</feature>
<feature type="binding site" evidence="1">
    <location>
        <position position="237"/>
    </location>
    <ligand>
        <name>ATP</name>
        <dbReference type="ChEBI" id="CHEBI:30616"/>
    </ligand>
</feature>
<feature type="binding site" evidence="1">
    <location>
        <begin position="285"/>
        <end position="286"/>
    </location>
    <ligand>
        <name>ATP</name>
        <dbReference type="ChEBI" id="CHEBI:30616"/>
    </ligand>
</feature>
<feature type="binding site" evidence="1">
    <location>
        <begin position="293"/>
        <end position="295"/>
    </location>
    <ligand>
        <name>ATP</name>
        <dbReference type="ChEBI" id="CHEBI:30616"/>
    </ligand>
</feature>
<reference key="1">
    <citation type="journal article" date="2005" name="Nucleic Acids Res.">
        <title>The genome sequence of Xanthomonas oryzae pathovar oryzae KACC10331, the bacterial blight pathogen of rice.</title>
        <authorList>
            <person name="Lee B.-M."/>
            <person name="Park Y.-J."/>
            <person name="Park D.-S."/>
            <person name="Kang H.-W."/>
            <person name="Kim J.-G."/>
            <person name="Song E.-S."/>
            <person name="Park I.-C."/>
            <person name="Yoon U.-H."/>
            <person name="Hahn J.-H."/>
            <person name="Koo B.-S."/>
            <person name="Lee G.-B."/>
            <person name="Kim H."/>
            <person name="Park H.-S."/>
            <person name="Yoon K.-O."/>
            <person name="Kim J.-H."/>
            <person name="Jung C.-H."/>
            <person name="Koh N.-H."/>
            <person name="Seo J.-S."/>
            <person name="Go S.-J."/>
        </authorList>
    </citation>
    <scope>NUCLEOTIDE SEQUENCE [LARGE SCALE GENOMIC DNA]</scope>
    <source>
        <strain>KACC10331 / KXO85</strain>
    </source>
</reference>
<gene>
    <name evidence="1" type="primary">glnS</name>
    <name type="ordered locus">XOO3713</name>
</gene>
<organism>
    <name type="scientific">Xanthomonas oryzae pv. oryzae (strain KACC10331 / KXO85)</name>
    <dbReference type="NCBI Taxonomy" id="291331"/>
    <lineage>
        <taxon>Bacteria</taxon>
        <taxon>Pseudomonadati</taxon>
        <taxon>Pseudomonadota</taxon>
        <taxon>Gammaproteobacteria</taxon>
        <taxon>Lysobacterales</taxon>
        <taxon>Lysobacteraceae</taxon>
        <taxon>Xanthomonas</taxon>
    </lineage>
</organism>
<dbReference type="EC" id="6.1.1.18" evidence="1"/>
<dbReference type="EMBL" id="AE013598">
    <property type="protein sequence ID" value="AAW76967.1"/>
    <property type="molecule type" value="Genomic_DNA"/>
</dbReference>
<dbReference type="SMR" id="Q5GWF4"/>
<dbReference type="STRING" id="291331.XOO3713"/>
<dbReference type="KEGG" id="xoo:XOO3713"/>
<dbReference type="HOGENOM" id="CLU_001882_2_3_6"/>
<dbReference type="Proteomes" id="UP000006735">
    <property type="component" value="Chromosome"/>
</dbReference>
<dbReference type="GO" id="GO:0005829">
    <property type="term" value="C:cytosol"/>
    <property type="evidence" value="ECO:0007669"/>
    <property type="project" value="TreeGrafter"/>
</dbReference>
<dbReference type="GO" id="GO:0005524">
    <property type="term" value="F:ATP binding"/>
    <property type="evidence" value="ECO:0007669"/>
    <property type="project" value="UniProtKB-UniRule"/>
</dbReference>
<dbReference type="GO" id="GO:0004819">
    <property type="term" value="F:glutamine-tRNA ligase activity"/>
    <property type="evidence" value="ECO:0007669"/>
    <property type="project" value="UniProtKB-UniRule"/>
</dbReference>
<dbReference type="GO" id="GO:0006425">
    <property type="term" value="P:glutaminyl-tRNA aminoacylation"/>
    <property type="evidence" value="ECO:0007669"/>
    <property type="project" value="InterPro"/>
</dbReference>
<dbReference type="GO" id="GO:0006424">
    <property type="term" value="P:glutamyl-tRNA aminoacylation"/>
    <property type="evidence" value="ECO:0007669"/>
    <property type="project" value="UniProtKB-UniRule"/>
</dbReference>
<dbReference type="FunFam" id="1.10.1160.10:FF:000001">
    <property type="entry name" value="Glutamine--tRNA ligase"/>
    <property type="match status" value="1"/>
</dbReference>
<dbReference type="FunFam" id="2.40.240.10:FF:000020">
    <property type="entry name" value="Glutamine--tRNA ligase"/>
    <property type="match status" value="1"/>
</dbReference>
<dbReference type="FunFam" id="2.40.240.10:FF:000023">
    <property type="entry name" value="Glutamine--tRNA ligase"/>
    <property type="match status" value="1"/>
</dbReference>
<dbReference type="FunFam" id="3.90.800.10:FF:000002">
    <property type="entry name" value="Glutamine--tRNA ligase"/>
    <property type="match status" value="1"/>
</dbReference>
<dbReference type="FunFam" id="3.40.50.620:FF:000037">
    <property type="entry name" value="Glutamine--tRNA ligase cytoplasmic"/>
    <property type="match status" value="1"/>
</dbReference>
<dbReference type="Gene3D" id="1.10.1160.10">
    <property type="entry name" value="Glutamyl-trna Synthetase, Domain 2"/>
    <property type="match status" value="1"/>
</dbReference>
<dbReference type="Gene3D" id="3.90.800.10">
    <property type="entry name" value="Glutamyl-tRNA Synthetase, Domain 3"/>
    <property type="match status" value="1"/>
</dbReference>
<dbReference type="Gene3D" id="3.40.50.620">
    <property type="entry name" value="HUPs"/>
    <property type="match status" value="1"/>
</dbReference>
<dbReference type="Gene3D" id="2.40.240.10">
    <property type="entry name" value="Ribosomal Protein L25, Chain P"/>
    <property type="match status" value="2"/>
</dbReference>
<dbReference type="HAMAP" id="MF_00126">
    <property type="entry name" value="Gln_tRNA_synth"/>
    <property type="match status" value="1"/>
</dbReference>
<dbReference type="InterPro" id="IPR001412">
    <property type="entry name" value="aa-tRNA-synth_I_CS"/>
</dbReference>
<dbReference type="InterPro" id="IPR004514">
    <property type="entry name" value="Gln-tRNA-synth"/>
</dbReference>
<dbReference type="InterPro" id="IPR050132">
    <property type="entry name" value="Gln/Glu-tRNA_Ligase"/>
</dbReference>
<dbReference type="InterPro" id="IPR022861">
    <property type="entry name" value="Gln_tRNA_ligase_bac"/>
</dbReference>
<dbReference type="InterPro" id="IPR000924">
    <property type="entry name" value="Glu/Gln-tRNA-synth"/>
</dbReference>
<dbReference type="InterPro" id="IPR020058">
    <property type="entry name" value="Glu/Gln-tRNA-synth_Ib_cat-dom"/>
</dbReference>
<dbReference type="InterPro" id="IPR020059">
    <property type="entry name" value="Glu/Gln-tRNA-synth_Ib_codon-bd"/>
</dbReference>
<dbReference type="InterPro" id="IPR020061">
    <property type="entry name" value="Glu_tRNA_lig_a-bdl"/>
</dbReference>
<dbReference type="InterPro" id="IPR020056">
    <property type="entry name" value="Rbsml_bL25/Gln-tRNA_synth_N"/>
</dbReference>
<dbReference type="InterPro" id="IPR011035">
    <property type="entry name" value="Ribosomal_bL25/Gln-tRNA_synth"/>
</dbReference>
<dbReference type="InterPro" id="IPR014729">
    <property type="entry name" value="Rossmann-like_a/b/a_fold"/>
</dbReference>
<dbReference type="InterPro" id="IPR049437">
    <property type="entry name" value="tRNA-synt_1c_C2"/>
</dbReference>
<dbReference type="NCBIfam" id="TIGR00440">
    <property type="entry name" value="glnS"/>
    <property type="match status" value="1"/>
</dbReference>
<dbReference type="NCBIfam" id="NF011291">
    <property type="entry name" value="PRK14703.1"/>
    <property type="match status" value="1"/>
</dbReference>
<dbReference type="PANTHER" id="PTHR43097:SF5">
    <property type="entry name" value="GLUTAMATE--TRNA LIGASE"/>
    <property type="match status" value="1"/>
</dbReference>
<dbReference type="PANTHER" id="PTHR43097">
    <property type="entry name" value="GLUTAMINE-TRNA LIGASE"/>
    <property type="match status" value="1"/>
</dbReference>
<dbReference type="Pfam" id="PF00749">
    <property type="entry name" value="tRNA-synt_1c"/>
    <property type="match status" value="1"/>
</dbReference>
<dbReference type="Pfam" id="PF03950">
    <property type="entry name" value="tRNA-synt_1c_C"/>
    <property type="match status" value="1"/>
</dbReference>
<dbReference type="Pfam" id="PF20974">
    <property type="entry name" value="tRNA-synt_1c_C2"/>
    <property type="match status" value="1"/>
</dbReference>
<dbReference type="PRINTS" id="PR00987">
    <property type="entry name" value="TRNASYNTHGLU"/>
</dbReference>
<dbReference type="SUPFAM" id="SSF52374">
    <property type="entry name" value="Nucleotidylyl transferase"/>
    <property type="match status" value="1"/>
</dbReference>
<dbReference type="SUPFAM" id="SSF50715">
    <property type="entry name" value="Ribosomal protein L25-like"/>
    <property type="match status" value="1"/>
</dbReference>
<dbReference type="PROSITE" id="PS00178">
    <property type="entry name" value="AA_TRNA_LIGASE_I"/>
    <property type="match status" value="1"/>
</dbReference>
<name>SYQ_XANOR</name>
<comment type="catalytic activity">
    <reaction evidence="1">
        <text>tRNA(Gln) + L-glutamine + ATP = L-glutaminyl-tRNA(Gln) + AMP + diphosphate</text>
        <dbReference type="Rhea" id="RHEA:20121"/>
        <dbReference type="Rhea" id="RHEA-COMP:9662"/>
        <dbReference type="Rhea" id="RHEA-COMP:9681"/>
        <dbReference type="ChEBI" id="CHEBI:30616"/>
        <dbReference type="ChEBI" id="CHEBI:33019"/>
        <dbReference type="ChEBI" id="CHEBI:58359"/>
        <dbReference type="ChEBI" id="CHEBI:78442"/>
        <dbReference type="ChEBI" id="CHEBI:78521"/>
        <dbReference type="ChEBI" id="CHEBI:456215"/>
        <dbReference type="EC" id="6.1.1.18"/>
    </reaction>
</comment>
<comment type="subunit">
    <text evidence="1">Monomer.</text>
</comment>
<comment type="subcellular location">
    <subcellularLocation>
        <location evidence="1">Cytoplasm</location>
    </subcellularLocation>
</comment>
<comment type="similarity">
    <text evidence="1">Belongs to the class-I aminoacyl-tRNA synthetase family.</text>
</comment>
<sequence>MSETLATDATTPAEKKDFIRQIVREDLASGKHTVIRTRFPPEPNGYLHIGHAKAICLDFGLAAEFGGLCNLRLDDTNPAKEDPEFAAAIQDDVRWLGYDWAQLRHASDYFEVYYLAAQKLIRDGHAFVCDLSAEQVRQYRGTLTEPGRHSPFRERSVEENLDLFQRMRAGEFPDGARTLRAKIDMASGNINLRDPALYRIKHVEHQNTGNAWPIYPMYDFAHSLGDAVEGITHSLCTLEFEDHRPLYDWCVDKVDLVGHPELLQPLLDKGLPREAAKPRQIEFSRLNINYTVMSKRKLTALVEEQLVDGWDDPRMYTLQGLRRRGYTPAAMRLFVERVGISKQNSLIDFSVLEGCLREDLDAAAARRMAVIDPLKLVLTNLPEGHTETLQFSNHPKDESFGTREVPFARVLWIEREDFAEVPPKGWKRLVPGGEIRLRGAGIARVDEVIKNADGDIVALRGWLDPESRPGMEGANRKVKGTIHWVSAAHAVEAEIRLYDRLFSVEKPDDESEGKTYRDYLNPESKRNVRGYVEPSAALAAPEQAFQFERTGYFVADSRDHSASTPVFNRSVTLRDAWAK</sequence>
<accession>Q5GWF4</accession>